<comment type="function">
    <text evidence="1">Involved in both the arginine and lysine biosynthetic pathways.</text>
</comment>
<comment type="catalytic activity">
    <reaction evidence="1">
        <text>[amino-group carrier protein]-C-terminal-N-(1-carboxy-5-oxopentan-1-yl)-L-glutamine + phosphate + NADP(+) = [amino-group carrier protein]-C-terminal-N-(1-carboxy-5-phosphooxy-5-oxopentan-1-yl)-L-glutamine + NADPH + H(+)</text>
        <dbReference type="Rhea" id="RHEA:41948"/>
        <dbReference type="Rhea" id="RHEA-COMP:9712"/>
        <dbReference type="Rhea" id="RHEA-COMP:9714"/>
        <dbReference type="ChEBI" id="CHEBI:15378"/>
        <dbReference type="ChEBI" id="CHEBI:43474"/>
        <dbReference type="ChEBI" id="CHEBI:57783"/>
        <dbReference type="ChEBI" id="CHEBI:58349"/>
        <dbReference type="ChEBI" id="CHEBI:78499"/>
        <dbReference type="ChEBI" id="CHEBI:78501"/>
        <dbReference type="EC" id="1.2.1.103"/>
    </reaction>
</comment>
<comment type="catalytic activity">
    <reaction evidence="1">
        <text>[amino-group carrier protein]-C-terminal-gamma-(L-glutamyl-5-semialdehyde)-L-glutamate + phosphate + NADP(+) = [amino-group carrier protein]-C-terminal-gamma-(5-phospho-L-glutamyl)-L-glutamate + NADPH + H(+)</text>
        <dbReference type="Rhea" id="RHEA:52668"/>
        <dbReference type="Rhea" id="RHEA-COMP:13313"/>
        <dbReference type="Rhea" id="RHEA-COMP:13327"/>
        <dbReference type="ChEBI" id="CHEBI:15378"/>
        <dbReference type="ChEBI" id="CHEBI:43474"/>
        <dbReference type="ChEBI" id="CHEBI:57783"/>
        <dbReference type="ChEBI" id="CHEBI:58349"/>
        <dbReference type="ChEBI" id="CHEBI:136717"/>
        <dbReference type="ChEBI" id="CHEBI:136761"/>
        <dbReference type="EC" id="1.2.1.106"/>
    </reaction>
</comment>
<comment type="pathway">
    <text evidence="1">Amino-acid biosynthesis; L-lysine biosynthesis via AAA pathway; L-lysine from L-alpha-aminoadipate (Thermus route): step 3/5.</text>
</comment>
<comment type="pathway">
    <text evidence="1">Amino-acid biosynthesis; L-arginine biosynthesis.</text>
</comment>
<comment type="subcellular location">
    <subcellularLocation>
        <location evidence="1">Cytoplasm</location>
    </subcellularLocation>
</comment>
<comment type="similarity">
    <text evidence="1">Belongs to the NAGSA dehydrogenase family. Type 1 subfamily. LysY sub-subfamily.</text>
</comment>
<name>LYSY_HALWD</name>
<gene>
    <name evidence="1" type="primary">lysY</name>
    <name type="synonym">argC</name>
    <name type="ordered locus">HQ_3715A</name>
</gene>
<feature type="chain" id="PRO_1000118060" description="Putative [LysW]-L-2-aminoadipate/[LysW]-L-glutamate phosphate reductase">
    <location>
        <begin position="1"/>
        <end position="346"/>
    </location>
</feature>
<feature type="region of interest" description="Disordered" evidence="2">
    <location>
        <begin position="178"/>
        <end position="198"/>
    </location>
</feature>
<feature type="active site" evidence="1">
    <location>
        <position position="147"/>
    </location>
</feature>
<feature type="binding site" evidence="1">
    <location>
        <begin position="12"/>
        <end position="15"/>
    </location>
    <ligand>
        <name>NADP(+)</name>
        <dbReference type="ChEBI" id="CHEBI:58349"/>
    </ligand>
</feature>
<feature type="binding site" evidence="1">
    <location>
        <position position="310"/>
    </location>
    <ligand>
        <name>NADP(+)</name>
        <dbReference type="ChEBI" id="CHEBI:58349"/>
    </ligand>
</feature>
<reference key="1">
    <citation type="journal article" date="2006" name="BMC Genomics">
        <title>The genome of the square archaeon Haloquadratum walsbyi: life at the limits of water activity.</title>
        <authorList>
            <person name="Bolhuis H."/>
            <person name="Palm P."/>
            <person name="Wende A."/>
            <person name="Falb M."/>
            <person name="Rampp M."/>
            <person name="Rodriguez-Valera F."/>
            <person name="Pfeiffer F."/>
            <person name="Oesterhelt D."/>
        </authorList>
    </citation>
    <scope>NUCLEOTIDE SEQUENCE [LARGE SCALE GENOMIC DNA]</scope>
    <source>
        <strain>DSM 16790 / HBSQ001</strain>
    </source>
</reference>
<protein>
    <recommendedName>
        <fullName evidence="1">Putative [LysW]-L-2-aminoadipate/[LysW]-L-glutamate phosphate reductase</fullName>
        <ecNumber evidence="1">1.2.1.103</ecNumber>
        <ecNumber evidence="1">1.2.1.106</ecNumber>
    </recommendedName>
</protein>
<organism>
    <name type="scientific">Haloquadratum walsbyi (strain DSM 16790 / HBSQ001)</name>
    <dbReference type="NCBI Taxonomy" id="362976"/>
    <lineage>
        <taxon>Archaea</taxon>
        <taxon>Methanobacteriati</taxon>
        <taxon>Methanobacteriota</taxon>
        <taxon>Stenosarchaea group</taxon>
        <taxon>Halobacteria</taxon>
        <taxon>Halobacteriales</taxon>
        <taxon>Haloferacaceae</taxon>
        <taxon>Haloquadratum</taxon>
    </lineage>
</organism>
<accession>Q18E32</accession>
<proteinExistence type="inferred from homology"/>
<sequence length="346" mass="36818">MNKYTASVVGGSGFTGGELLRLLTQHPYFEVVQATSRSKTHKTIGNVHPNLRSVDLRFTDPSELESVDILFAATPHGVSMQQIESFTAAADTVVDLSADFRLNSAEQYDEWYDGHACPEYLEDAEYALPEINRSNLVGASLIASGGCNATATILGLKPLFDADILTGDEQVVVDVKVGSSEGGAGGGDASSHPERSGVVRPYAPTGHRHEAEIEQFLGLSVSFTAHAVEMTRGASATCHVFPSEPVSNSDLWGAYHDVYAEEPFMRTVAGGGGVYRYPEPKSVAGSNYAEVGFERDPENHRLVIFSAIDNMMKGSAGQAVHAANIALGIDETTGLEFTGLHPVGAP</sequence>
<keyword id="KW-0028">Amino-acid biosynthesis</keyword>
<keyword id="KW-0055">Arginine biosynthesis</keyword>
<keyword id="KW-0963">Cytoplasm</keyword>
<keyword id="KW-0457">Lysine biosynthesis</keyword>
<keyword id="KW-0521">NADP</keyword>
<keyword id="KW-0560">Oxidoreductase</keyword>
<keyword id="KW-1185">Reference proteome</keyword>
<dbReference type="EC" id="1.2.1.103" evidence="1"/>
<dbReference type="EC" id="1.2.1.106" evidence="1"/>
<dbReference type="EMBL" id="AM180088">
    <property type="protein sequence ID" value="CAJ53801.1"/>
    <property type="molecule type" value="Genomic_DNA"/>
</dbReference>
<dbReference type="RefSeq" id="WP_011572883.1">
    <property type="nucleotide sequence ID" value="NC_008212.1"/>
</dbReference>
<dbReference type="SMR" id="Q18E32"/>
<dbReference type="STRING" id="362976.HQ_3715A"/>
<dbReference type="GeneID" id="4193708"/>
<dbReference type="KEGG" id="hwa:HQ_3715A"/>
<dbReference type="eggNOG" id="arCOG00495">
    <property type="taxonomic scope" value="Archaea"/>
</dbReference>
<dbReference type="HOGENOM" id="CLU_006384_0_1_2"/>
<dbReference type="UniPathway" id="UPA00033">
    <property type="reaction ID" value="UER00037"/>
</dbReference>
<dbReference type="UniPathway" id="UPA00068"/>
<dbReference type="Proteomes" id="UP000001975">
    <property type="component" value="Chromosome"/>
</dbReference>
<dbReference type="GO" id="GO:0005737">
    <property type="term" value="C:cytoplasm"/>
    <property type="evidence" value="ECO:0007669"/>
    <property type="project" value="UniProtKB-SubCell"/>
</dbReference>
<dbReference type="GO" id="GO:0043870">
    <property type="term" value="F:N-acetyl-gamma-aminoadipyl-phosphate reductase activity"/>
    <property type="evidence" value="ECO:0007669"/>
    <property type="project" value="RHEA"/>
</dbReference>
<dbReference type="GO" id="GO:0003942">
    <property type="term" value="F:N-acetyl-gamma-glutamyl-phosphate reductase activity"/>
    <property type="evidence" value="ECO:0007669"/>
    <property type="project" value="InterPro"/>
</dbReference>
<dbReference type="GO" id="GO:0051287">
    <property type="term" value="F:NAD binding"/>
    <property type="evidence" value="ECO:0007669"/>
    <property type="project" value="InterPro"/>
</dbReference>
<dbReference type="GO" id="GO:0070401">
    <property type="term" value="F:NADP+ binding"/>
    <property type="evidence" value="ECO:0007669"/>
    <property type="project" value="InterPro"/>
</dbReference>
<dbReference type="GO" id="GO:0042450">
    <property type="term" value="P:arginine biosynthetic process via ornithine"/>
    <property type="evidence" value="ECO:0007669"/>
    <property type="project" value="UniProtKB-UniRule"/>
</dbReference>
<dbReference type="GO" id="GO:0006526">
    <property type="term" value="P:L-arginine biosynthetic process"/>
    <property type="evidence" value="ECO:0007669"/>
    <property type="project" value="UniProtKB-UniPathway"/>
</dbReference>
<dbReference type="GO" id="GO:0019878">
    <property type="term" value="P:lysine biosynthetic process via aminoadipic acid"/>
    <property type="evidence" value="ECO:0007669"/>
    <property type="project" value="UniProtKB-UniRule"/>
</dbReference>
<dbReference type="CDD" id="cd23939">
    <property type="entry name" value="AGPR_1_C_LysY"/>
    <property type="match status" value="1"/>
</dbReference>
<dbReference type="CDD" id="cd24151">
    <property type="entry name" value="AGPR_1_N_LysY"/>
    <property type="match status" value="1"/>
</dbReference>
<dbReference type="Gene3D" id="3.30.360.10">
    <property type="entry name" value="Dihydrodipicolinate Reductase, domain 2"/>
    <property type="match status" value="1"/>
</dbReference>
<dbReference type="Gene3D" id="3.40.50.720">
    <property type="entry name" value="NAD(P)-binding Rossmann-like Domain"/>
    <property type="match status" value="1"/>
</dbReference>
<dbReference type="HAMAP" id="MF_00150">
    <property type="entry name" value="ArgC_type1"/>
    <property type="match status" value="1"/>
</dbReference>
<dbReference type="HAMAP" id="MF_02083">
    <property type="entry name" value="LysY"/>
    <property type="match status" value="1"/>
</dbReference>
<dbReference type="InterPro" id="IPR000706">
    <property type="entry name" value="AGPR_type-1"/>
</dbReference>
<dbReference type="InterPro" id="IPR037535">
    <property type="entry name" value="LysY"/>
</dbReference>
<dbReference type="InterPro" id="IPR036291">
    <property type="entry name" value="NAD(P)-bd_dom_sf"/>
</dbReference>
<dbReference type="InterPro" id="IPR050085">
    <property type="entry name" value="NAGSA_dehydrogenase"/>
</dbReference>
<dbReference type="InterPro" id="IPR000534">
    <property type="entry name" value="Semialdehyde_DH_NAD-bd"/>
</dbReference>
<dbReference type="NCBIfam" id="TIGR01850">
    <property type="entry name" value="argC"/>
    <property type="match status" value="1"/>
</dbReference>
<dbReference type="PANTHER" id="PTHR32338:SF11">
    <property type="entry name" value="[LYSW]-L-2-AMINOADIPATE_[LYSW]-L-GLUTAMATE PHOSPHATE REDUCTASE-RELATED"/>
    <property type="match status" value="1"/>
</dbReference>
<dbReference type="PANTHER" id="PTHR32338">
    <property type="entry name" value="N-ACETYL-GAMMA-GLUTAMYL-PHOSPHATE REDUCTASE, CHLOROPLASTIC-RELATED-RELATED"/>
    <property type="match status" value="1"/>
</dbReference>
<dbReference type="Pfam" id="PF01118">
    <property type="entry name" value="Semialdhyde_dh"/>
    <property type="match status" value="1"/>
</dbReference>
<dbReference type="Pfam" id="PF22698">
    <property type="entry name" value="Semialdhyde_dhC_1"/>
    <property type="match status" value="1"/>
</dbReference>
<dbReference type="SMART" id="SM00859">
    <property type="entry name" value="Semialdhyde_dh"/>
    <property type="match status" value="1"/>
</dbReference>
<dbReference type="SUPFAM" id="SSF55347">
    <property type="entry name" value="Glyceraldehyde-3-phosphate dehydrogenase-like, C-terminal domain"/>
    <property type="match status" value="1"/>
</dbReference>
<dbReference type="SUPFAM" id="SSF51735">
    <property type="entry name" value="NAD(P)-binding Rossmann-fold domains"/>
    <property type="match status" value="1"/>
</dbReference>
<evidence type="ECO:0000255" key="1">
    <source>
        <dbReference type="HAMAP-Rule" id="MF_02083"/>
    </source>
</evidence>
<evidence type="ECO:0000256" key="2">
    <source>
        <dbReference type="SAM" id="MobiDB-lite"/>
    </source>
</evidence>